<protein>
    <recommendedName>
        <fullName evidence="1">High frequency lysogenization protein HflD</fullName>
    </recommendedName>
</protein>
<comment type="function">
    <text evidence="1">Negative regulator of phage lambda lysogenization. Contributes to the degradation of the phage regulatory protein CII. Acts probably by holding CII on the membrane surface, away from the target promoters, but close to the FtsH protease.</text>
</comment>
<comment type="subunit">
    <text evidence="1">Interacts with CII protein from phage lambda.</text>
</comment>
<comment type="subcellular location">
    <subcellularLocation>
        <location>Cytoplasm</location>
    </subcellularLocation>
    <subcellularLocation>
        <location evidence="1">Cell inner membrane</location>
        <topology evidence="1">Peripheral membrane protein</topology>
        <orientation evidence="1">Cytoplasmic side</orientation>
    </subcellularLocation>
</comment>
<comment type="similarity">
    <text evidence="1">Belongs to the HflD family.</text>
</comment>
<accession>B7NKC6</accession>
<evidence type="ECO:0000255" key="1">
    <source>
        <dbReference type="HAMAP-Rule" id="MF_00695"/>
    </source>
</evidence>
<sequence length="213" mass="22934">MAKNYYDITLALAGICQSARLVQQLAHQGHCDGDALHVSLNSIIDMNPSSTLAVFGGSEANLRVGLETLLGVLNASSRQGLNAELTRYTLSLMVLERKLSSAKGALDTLGNRINGLQRQLEHFDLQSETLMSAMAAIYVDVISPLGPRIQVTGSPAVLQSPQVQAKVRATLLAGIRAAVLWHQVGGGRLQLMFSRNRLTTQAKQILAHLTPEL</sequence>
<proteinExistence type="inferred from homology"/>
<reference key="1">
    <citation type="journal article" date="2009" name="PLoS Genet.">
        <title>Organised genome dynamics in the Escherichia coli species results in highly diverse adaptive paths.</title>
        <authorList>
            <person name="Touchon M."/>
            <person name="Hoede C."/>
            <person name="Tenaillon O."/>
            <person name="Barbe V."/>
            <person name="Baeriswyl S."/>
            <person name="Bidet P."/>
            <person name="Bingen E."/>
            <person name="Bonacorsi S."/>
            <person name="Bouchier C."/>
            <person name="Bouvet O."/>
            <person name="Calteau A."/>
            <person name="Chiapello H."/>
            <person name="Clermont O."/>
            <person name="Cruveiller S."/>
            <person name="Danchin A."/>
            <person name="Diard M."/>
            <person name="Dossat C."/>
            <person name="Karoui M.E."/>
            <person name="Frapy E."/>
            <person name="Garry L."/>
            <person name="Ghigo J.M."/>
            <person name="Gilles A.M."/>
            <person name="Johnson J."/>
            <person name="Le Bouguenec C."/>
            <person name="Lescat M."/>
            <person name="Mangenot S."/>
            <person name="Martinez-Jehanne V."/>
            <person name="Matic I."/>
            <person name="Nassif X."/>
            <person name="Oztas S."/>
            <person name="Petit M.A."/>
            <person name="Pichon C."/>
            <person name="Rouy Z."/>
            <person name="Ruf C.S."/>
            <person name="Schneider D."/>
            <person name="Tourret J."/>
            <person name="Vacherie B."/>
            <person name="Vallenet D."/>
            <person name="Medigue C."/>
            <person name="Rocha E.P.C."/>
            <person name="Denamur E."/>
        </authorList>
    </citation>
    <scope>NUCLEOTIDE SEQUENCE [LARGE SCALE GENOMIC DNA]</scope>
    <source>
        <strain>IAI39 / ExPEC</strain>
    </source>
</reference>
<keyword id="KW-0997">Cell inner membrane</keyword>
<keyword id="KW-1003">Cell membrane</keyword>
<keyword id="KW-0175">Coiled coil</keyword>
<keyword id="KW-0963">Cytoplasm</keyword>
<keyword id="KW-0472">Membrane</keyword>
<dbReference type="EMBL" id="CU928164">
    <property type="protein sequence ID" value="CAR18134.1"/>
    <property type="molecule type" value="Genomic_DNA"/>
</dbReference>
<dbReference type="RefSeq" id="WP_001295971.1">
    <property type="nucleotide sequence ID" value="NC_011750.1"/>
</dbReference>
<dbReference type="RefSeq" id="YP_002407974.1">
    <property type="nucleotide sequence ID" value="NC_011750.1"/>
</dbReference>
<dbReference type="SMR" id="B7NKC6"/>
<dbReference type="STRING" id="585057.ECIAI39_2005"/>
<dbReference type="KEGG" id="ect:ECIAI39_2005"/>
<dbReference type="PATRIC" id="fig|585057.6.peg.2083"/>
<dbReference type="HOGENOM" id="CLU_098920_0_0_6"/>
<dbReference type="Proteomes" id="UP000000749">
    <property type="component" value="Chromosome"/>
</dbReference>
<dbReference type="GO" id="GO:0005737">
    <property type="term" value="C:cytoplasm"/>
    <property type="evidence" value="ECO:0007669"/>
    <property type="project" value="UniProtKB-SubCell"/>
</dbReference>
<dbReference type="GO" id="GO:0005886">
    <property type="term" value="C:plasma membrane"/>
    <property type="evidence" value="ECO:0007669"/>
    <property type="project" value="UniProtKB-SubCell"/>
</dbReference>
<dbReference type="FunFam" id="1.10.3890.10:FF:000001">
    <property type="entry name" value="High frequency lysogenization protein HflD homolog"/>
    <property type="match status" value="1"/>
</dbReference>
<dbReference type="Gene3D" id="1.10.3890.10">
    <property type="entry name" value="HflD-like"/>
    <property type="match status" value="1"/>
</dbReference>
<dbReference type="HAMAP" id="MF_00695">
    <property type="entry name" value="HflD_protein"/>
    <property type="match status" value="1"/>
</dbReference>
<dbReference type="InterPro" id="IPR007451">
    <property type="entry name" value="HflD"/>
</dbReference>
<dbReference type="InterPro" id="IPR035932">
    <property type="entry name" value="HflD-like_sf"/>
</dbReference>
<dbReference type="NCBIfam" id="NF001245">
    <property type="entry name" value="PRK00218.1-1"/>
    <property type="match status" value="1"/>
</dbReference>
<dbReference type="NCBIfam" id="NF001246">
    <property type="entry name" value="PRK00218.1-2"/>
    <property type="match status" value="1"/>
</dbReference>
<dbReference type="NCBIfam" id="NF001248">
    <property type="entry name" value="PRK00218.1-4"/>
    <property type="match status" value="1"/>
</dbReference>
<dbReference type="NCBIfam" id="NF001249">
    <property type="entry name" value="PRK00218.1-5"/>
    <property type="match status" value="1"/>
</dbReference>
<dbReference type="PANTHER" id="PTHR38100">
    <property type="entry name" value="HIGH FREQUENCY LYSOGENIZATION PROTEIN HFLD"/>
    <property type="match status" value="1"/>
</dbReference>
<dbReference type="PANTHER" id="PTHR38100:SF1">
    <property type="entry name" value="HIGH FREQUENCY LYSOGENIZATION PROTEIN HFLD"/>
    <property type="match status" value="1"/>
</dbReference>
<dbReference type="Pfam" id="PF04356">
    <property type="entry name" value="DUF489"/>
    <property type="match status" value="1"/>
</dbReference>
<dbReference type="SUPFAM" id="SSF101322">
    <property type="entry name" value="YcfC-like"/>
    <property type="match status" value="1"/>
</dbReference>
<organism>
    <name type="scientific">Escherichia coli O7:K1 (strain IAI39 / ExPEC)</name>
    <dbReference type="NCBI Taxonomy" id="585057"/>
    <lineage>
        <taxon>Bacteria</taxon>
        <taxon>Pseudomonadati</taxon>
        <taxon>Pseudomonadota</taxon>
        <taxon>Gammaproteobacteria</taxon>
        <taxon>Enterobacterales</taxon>
        <taxon>Enterobacteriaceae</taxon>
        <taxon>Escherichia</taxon>
    </lineage>
</organism>
<feature type="chain" id="PRO_1000132284" description="High frequency lysogenization protein HflD">
    <location>
        <begin position="1"/>
        <end position="213"/>
    </location>
</feature>
<feature type="coiled-coil region" evidence="1">
    <location>
        <begin position="79"/>
        <end position="126"/>
    </location>
</feature>
<gene>
    <name evidence="1" type="primary">hflD</name>
    <name type="ordered locus">ECIAI39_2005</name>
</gene>
<name>HFLD_ECO7I</name>